<protein>
    <recommendedName>
        <fullName evidence="1">Probable glycine dehydrogenase (decarboxylating) subunit 1</fullName>
        <ecNumber evidence="1">1.4.4.2</ecNumber>
    </recommendedName>
    <alternativeName>
        <fullName evidence="1">Glycine cleavage system P-protein subunit 1</fullName>
    </alternativeName>
    <alternativeName>
        <fullName evidence="1">Glycine decarboxylase subunit 1</fullName>
    </alternativeName>
    <alternativeName>
        <fullName evidence="1">Glycine dehydrogenase (aminomethyl-transferring) subunit 1</fullName>
    </alternativeName>
</protein>
<organism>
    <name type="scientific">Methylocella silvestris (strain DSM 15510 / CIP 108128 / LMG 27833 / NCIMB 13906 / BL2)</name>
    <dbReference type="NCBI Taxonomy" id="395965"/>
    <lineage>
        <taxon>Bacteria</taxon>
        <taxon>Pseudomonadati</taxon>
        <taxon>Pseudomonadota</taxon>
        <taxon>Alphaproteobacteria</taxon>
        <taxon>Hyphomicrobiales</taxon>
        <taxon>Beijerinckiaceae</taxon>
        <taxon>Methylocella</taxon>
    </lineage>
</organism>
<dbReference type="EC" id="1.4.4.2" evidence="1"/>
<dbReference type="EMBL" id="CP001280">
    <property type="protein sequence ID" value="ACK50184.1"/>
    <property type="molecule type" value="Genomic_DNA"/>
</dbReference>
<dbReference type="RefSeq" id="WP_012590254.1">
    <property type="nucleotide sequence ID" value="NC_011666.1"/>
</dbReference>
<dbReference type="SMR" id="B8EPH9"/>
<dbReference type="STRING" id="395965.Msil_1215"/>
<dbReference type="KEGG" id="msl:Msil_1215"/>
<dbReference type="eggNOG" id="COG0403">
    <property type="taxonomic scope" value="Bacteria"/>
</dbReference>
<dbReference type="HOGENOM" id="CLU_004620_0_2_5"/>
<dbReference type="OrthoDB" id="9801272at2"/>
<dbReference type="Proteomes" id="UP000002257">
    <property type="component" value="Chromosome"/>
</dbReference>
<dbReference type="GO" id="GO:0004375">
    <property type="term" value="F:glycine dehydrogenase (decarboxylating) activity"/>
    <property type="evidence" value="ECO:0007669"/>
    <property type="project" value="UniProtKB-EC"/>
</dbReference>
<dbReference type="GO" id="GO:0019464">
    <property type="term" value="P:glycine decarboxylation via glycine cleavage system"/>
    <property type="evidence" value="ECO:0007669"/>
    <property type="project" value="UniProtKB-UniRule"/>
</dbReference>
<dbReference type="GO" id="GO:0009116">
    <property type="term" value="P:nucleoside metabolic process"/>
    <property type="evidence" value="ECO:0007669"/>
    <property type="project" value="InterPro"/>
</dbReference>
<dbReference type="CDD" id="cd00613">
    <property type="entry name" value="GDC-P"/>
    <property type="match status" value="1"/>
</dbReference>
<dbReference type="Gene3D" id="3.90.1150.10">
    <property type="entry name" value="Aspartate Aminotransferase, domain 1"/>
    <property type="match status" value="1"/>
</dbReference>
<dbReference type="Gene3D" id="3.40.640.10">
    <property type="entry name" value="Type I PLP-dependent aspartate aminotransferase-like (Major domain)"/>
    <property type="match status" value="1"/>
</dbReference>
<dbReference type="HAMAP" id="MF_00712">
    <property type="entry name" value="GcvPA"/>
    <property type="match status" value="1"/>
</dbReference>
<dbReference type="InterPro" id="IPR023010">
    <property type="entry name" value="GcvPA"/>
</dbReference>
<dbReference type="InterPro" id="IPR049315">
    <property type="entry name" value="GDC-P_N"/>
</dbReference>
<dbReference type="InterPro" id="IPR020581">
    <property type="entry name" value="GDC_P"/>
</dbReference>
<dbReference type="InterPro" id="IPR015424">
    <property type="entry name" value="PyrdxlP-dep_Trfase"/>
</dbReference>
<dbReference type="InterPro" id="IPR015421">
    <property type="entry name" value="PyrdxlP-dep_Trfase_major"/>
</dbReference>
<dbReference type="InterPro" id="IPR015422">
    <property type="entry name" value="PyrdxlP-dep_Trfase_small"/>
</dbReference>
<dbReference type="NCBIfam" id="NF001696">
    <property type="entry name" value="PRK00451.1"/>
    <property type="match status" value="1"/>
</dbReference>
<dbReference type="PANTHER" id="PTHR42806">
    <property type="entry name" value="GLYCINE CLEAVAGE SYSTEM P-PROTEIN"/>
    <property type="match status" value="1"/>
</dbReference>
<dbReference type="PANTHER" id="PTHR42806:SF1">
    <property type="entry name" value="GLYCINE DEHYDROGENASE (DECARBOXYLATING)"/>
    <property type="match status" value="1"/>
</dbReference>
<dbReference type="Pfam" id="PF02347">
    <property type="entry name" value="GDC-P"/>
    <property type="match status" value="1"/>
</dbReference>
<dbReference type="PIRSF" id="PIRSF006815">
    <property type="entry name" value="GcvPA"/>
    <property type="match status" value="1"/>
</dbReference>
<dbReference type="SUPFAM" id="SSF53383">
    <property type="entry name" value="PLP-dependent transferases"/>
    <property type="match status" value="1"/>
</dbReference>
<name>GCSPA_METSB</name>
<proteinExistence type="inferred from homology"/>
<evidence type="ECO:0000255" key="1">
    <source>
        <dbReference type="HAMAP-Rule" id="MF_00712"/>
    </source>
</evidence>
<gene>
    <name evidence="1" type="primary">gcvPA</name>
    <name type="ordered locus">Msil_1215</name>
</gene>
<feature type="chain" id="PRO_1000147990" description="Probable glycine dehydrogenase (decarboxylating) subunit 1">
    <location>
        <begin position="1"/>
        <end position="446"/>
    </location>
</feature>
<sequence>MRYLPLNSEDRSEMLARIGVDSIDALFSSIPEASRLSRDLDLPLRRSEMETQRLLSGMAARNTPASSAPFFIGAGAYKHHIPASVDHLIQRSEFLTSYTPYQPEISQGTLQAIFEFQTQVAALTAMDVANASMYDGSTATMEAVLMAHRVTKRRKAVLSGGLHPHYADVVRTVSKMTDNDALSLPPDVFAAEDLAAEIDEETSCVVVQTPDAFGNLRDLSPLAAACKEHGALLIAVFTEAVSLGLVKPPGAMGADIVVGEGQSIGNGLNFGGPYVGLFATRQKYLRQMPGRLCGETVDADGRRGFVLTLSTREQHIKRDKATSSICTNAGLCCLAFTMHLTLLGEAGLRQLARVNHANAVDLAGRFAQIYGVEVLNRSFFNEFTLRVPGPAAEIVEHLAQKGILGGVPASRLWPGEDLDDLMIVASSEINTDEDRAAFASALRGIA</sequence>
<comment type="function">
    <text evidence="1">The glycine cleavage system catalyzes the degradation of glycine. The P protein binds the alpha-amino group of glycine through its pyridoxal phosphate cofactor; CO(2) is released and the remaining methylamine moiety is then transferred to the lipoamide cofactor of the H protein.</text>
</comment>
<comment type="catalytic activity">
    <reaction evidence="1">
        <text>N(6)-[(R)-lipoyl]-L-lysyl-[glycine-cleavage complex H protein] + glycine + H(+) = N(6)-[(R)-S(8)-aminomethyldihydrolipoyl]-L-lysyl-[glycine-cleavage complex H protein] + CO2</text>
        <dbReference type="Rhea" id="RHEA:24304"/>
        <dbReference type="Rhea" id="RHEA-COMP:10494"/>
        <dbReference type="Rhea" id="RHEA-COMP:10495"/>
        <dbReference type="ChEBI" id="CHEBI:15378"/>
        <dbReference type="ChEBI" id="CHEBI:16526"/>
        <dbReference type="ChEBI" id="CHEBI:57305"/>
        <dbReference type="ChEBI" id="CHEBI:83099"/>
        <dbReference type="ChEBI" id="CHEBI:83143"/>
        <dbReference type="EC" id="1.4.4.2"/>
    </reaction>
</comment>
<comment type="subunit">
    <text evidence="1">The glycine cleavage system is composed of four proteins: P, T, L and H. In this organism, the P 'protein' is a heterodimer of two subunits.</text>
</comment>
<comment type="similarity">
    <text evidence="1">Belongs to the GcvP family. N-terminal subunit subfamily.</text>
</comment>
<accession>B8EPH9</accession>
<reference key="1">
    <citation type="journal article" date="2010" name="J. Bacteriol.">
        <title>Complete genome sequence of the aerobic facultative methanotroph Methylocella silvestris BL2.</title>
        <authorList>
            <person name="Chen Y."/>
            <person name="Crombie A."/>
            <person name="Rahman M.T."/>
            <person name="Dedysh S.N."/>
            <person name="Liesack W."/>
            <person name="Stott M.B."/>
            <person name="Alam M."/>
            <person name="Theisen A.R."/>
            <person name="Murrell J.C."/>
            <person name="Dunfield P.F."/>
        </authorList>
    </citation>
    <scope>NUCLEOTIDE SEQUENCE [LARGE SCALE GENOMIC DNA]</scope>
    <source>
        <strain>DSM 15510 / CIP 108128 / LMG 27833 / NCIMB 13906 / BL2</strain>
    </source>
</reference>
<keyword id="KW-0560">Oxidoreductase</keyword>
<keyword id="KW-1185">Reference proteome</keyword>